<gene>
    <name evidence="1" type="primary">lepA</name>
    <name type="ordered locus">MGAS2096_Spy0850</name>
</gene>
<proteinExistence type="inferred from homology"/>
<reference key="1">
    <citation type="journal article" date="2006" name="Proc. Natl. Acad. Sci. U.S.A.">
        <title>Molecular genetic anatomy of inter- and intraserotype variation in the human bacterial pathogen group A Streptococcus.</title>
        <authorList>
            <person name="Beres S.B."/>
            <person name="Richter E.W."/>
            <person name="Nagiec M.J."/>
            <person name="Sumby P."/>
            <person name="Porcella S.F."/>
            <person name="DeLeo F.R."/>
            <person name="Musser J.M."/>
        </authorList>
    </citation>
    <scope>NUCLEOTIDE SEQUENCE [LARGE SCALE GENOMIC DNA]</scope>
    <source>
        <strain>MGAS2096</strain>
    </source>
</reference>
<name>LEPA_STRPB</name>
<feature type="chain" id="PRO_0000265710" description="Elongation factor 4">
    <location>
        <begin position="1"/>
        <end position="635"/>
    </location>
</feature>
<feature type="domain" description="tr-type G">
    <location>
        <begin position="11"/>
        <end position="193"/>
    </location>
</feature>
<feature type="binding site" evidence="1">
    <location>
        <begin position="23"/>
        <end position="28"/>
    </location>
    <ligand>
        <name>GTP</name>
        <dbReference type="ChEBI" id="CHEBI:37565"/>
    </ligand>
</feature>
<feature type="binding site" evidence="1">
    <location>
        <begin position="140"/>
        <end position="143"/>
    </location>
    <ligand>
        <name>GTP</name>
        <dbReference type="ChEBI" id="CHEBI:37565"/>
    </ligand>
</feature>
<sequence length="635" mass="71209">MNSQDLKKRQEKIRNFSIIAHIDHGKSTLADRILEKTETVSSREMQAQLLDSMDLERERGITIKLNAIELNYTAKDGETYIFHLIDTPGHVDFTYEVSRSLAACEGAILVVDAAQGIEAQTLANVYLALDNDLEILPVINKIDLPAADPERVRHEVEDVIGLDASEAVLASAKAGIGIEEILEQIVEKVPAPTGDVDAPLQALIFDSVYDAYRGVILQVRIVNGIVKPGDKIQMMSNGKTFDVTEVGIFTPKAVGRDFLATGDVGYVAASIKTVADTRVGDTVTLANNPAKEALHGYKQMNPMVFAGIYPIESNKYNDLREALEKLQLNDASLQFEPETSQALGFGFRCGFLGLLHMDVIQERLEREFNIDLIMTAPSVVYHVHTTDEDMIEVSNPSEFPDPTRVAFIEEPYVKAQIMVPQEFVGAVMELSQRKRGDFVTMDYIDDNRVNVIYQIPLAEIVFDFFDKLKSSTRGYASFDYDMSEYRRSQLVKMDILLNGDKVDALSFIVHKEFAYERGKIIVEKLKKIIPRQQFEVPIQAAIGQKIVARSDIKALRKNVLAKCYGGDVSRKRKLLEKQKAGKKRMKAIGSVEVPQEAFLSVLSMDDRCQEITKPNRLVFRGELLWAYMTKKLIIS</sequence>
<accession>Q1JC06</accession>
<comment type="function">
    <text evidence="1">Required for accurate and efficient protein synthesis under certain stress conditions. May act as a fidelity factor of the translation reaction, by catalyzing a one-codon backward translocation of tRNAs on improperly translocated ribosomes. Back-translocation proceeds from a post-translocation (POST) complex to a pre-translocation (PRE) complex, thus giving elongation factor G a second chance to translocate the tRNAs correctly. Binds to ribosomes in a GTP-dependent manner.</text>
</comment>
<comment type="catalytic activity">
    <reaction evidence="1">
        <text>GTP + H2O = GDP + phosphate + H(+)</text>
        <dbReference type="Rhea" id="RHEA:19669"/>
        <dbReference type="ChEBI" id="CHEBI:15377"/>
        <dbReference type="ChEBI" id="CHEBI:15378"/>
        <dbReference type="ChEBI" id="CHEBI:37565"/>
        <dbReference type="ChEBI" id="CHEBI:43474"/>
        <dbReference type="ChEBI" id="CHEBI:58189"/>
        <dbReference type="EC" id="3.6.5.n1"/>
    </reaction>
</comment>
<comment type="subcellular location">
    <subcellularLocation>
        <location evidence="1">Cell membrane</location>
        <topology evidence="1">Peripheral membrane protein</topology>
        <orientation evidence="1">Cytoplasmic side</orientation>
    </subcellularLocation>
</comment>
<comment type="similarity">
    <text evidence="1">Belongs to the TRAFAC class translation factor GTPase superfamily. Classic translation factor GTPase family. LepA subfamily.</text>
</comment>
<evidence type="ECO:0000255" key="1">
    <source>
        <dbReference type="HAMAP-Rule" id="MF_00071"/>
    </source>
</evidence>
<keyword id="KW-1003">Cell membrane</keyword>
<keyword id="KW-0342">GTP-binding</keyword>
<keyword id="KW-0378">Hydrolase</keyword>
<keyword id="KW-0472">Membrane</keyword>
<keyword id="KW-0547">Nucleotide-binding</keyword>
<keyword id="KW-0648">Protein biosynthesis</keyword>
<organism>
    <name type="scientific">Streptococcus pyogenes serotype M12 (strain MGAS2096)</name>
    <dbReference type="NCBI Taxonomy" id="370553"/>
    <lineage>
        <taxon>Bacteria</taxon>
        <taxon>Bacillati</taxon>
        <taxon>Bacillota</taxon>
        <taxon>Bacilli</taxon>
        <taxon>Lactobacillales</taxon>
        <taxon>Streptococcaceae</taxon>
        <taxon>Streptococcus</taxon>
    </lineage>
</organism>
<dbReference type="EC" id="3.6.5.n1" evidence="1"/>
<dbReference type="EMBL" id="CP000261">
    <property type="protein sequence ID" value="ABF35902.1"/>
    <property type="molecule type" value="Genomic_DNA"/>
</dbReference>
<dbReference type="SMR" id="Q1JC06"/>
<dbReference type="KEGG" id="spj:MGAS2096_Spy0850"/>
<dbReference type="HOGENOM" id="CLU_009995_3_3_9"/>
<dbReference type="GO" id="GO:0005886">
    <property type="term" value="C:plasma membrane"/>
    <property type="evidence" value="ECO:0007669"/>
    <property type="project" value="UniProtKB-SubCell"/>
</dbReference>
<dbReference type="GO" id="GO:0005525">
    <property type="term" value="F:GTP binding"/>
    <property type="evidence" value="ECO:0007669"/>
    <property type="project" value="UniProtKB-UniRule"/>
</dbReference>
<dbReference type="GO" id="GO:0003924">
    <property type="term" value="F:GTPase activity"/>
    <property type="evidence" value="ECO:0007669"/>
    <property type="project" value="UniProtKB-UniRule"/>
</dbReference>
<dbReference type="GO" id="GO:0043022">
    <property type="term" value="F:ribosome binding"/>
    <property type="evidence" value="ECO:0007669"/>
    <property type="project" value="UniProtKB-UniRule"/>
</dbReference>
<dbReference type="GO" id="GO:0003746">
    <property type="term" value="F:translation elongation factor activity"/>
    <property type="evidence" value="ECO:0007669"/>
    <property type="project" value="UniProtKB-UniRule"/>
</dbReference>
<dbReference type="GO" id="GO:0045727">
    <property type="term" value="P:positive regulation of translation"/>
    <property type="evidence" value="ECO:0007669"/>
    <property type="project" value="UniProtKB-UniRule"/>
</dbReference>
<dbReference type="CDD" id="cd03699">
    <property type="entry name" value="EF4_II"/>
    <property type="match status" value="1"/>
</dbReference>
<dbReference type="CDD" id="cd16260">
    <property type="entry name" value="EF4_III"/>
    <property type="match status" value="1"/>
</dbReference>
<dbReference type="CDD" id="cd01890">
    <property type="entry name" value="LepA"/>
    <property type="match status" value="1"/>
</dbReference>
<dbReference type="CDD" id="cd03709">
    <property type="entry name" value="lepA_C"/>
    <property type="match status" value="1"/>
</dbReference>
<dbReference type="FunFam" id="3.40.50.300:FF:000078">
    <property type="entry name" value="Elongation factor 4"/>
    <property type="match status" value="1"/>
</dbReference>
<dbReference type="FunFam" id="2.40.30.10:FF:000015">
    <property type="entry name" value="Translation factor GUF1, mitochondrial"/>
    <property type="match status" value="1"/>
</dbReference>
<dbReference type="FunFam" id="3.30.70.240:FF:000007">
    <property type="entry name" value="Translation factor GUF1, mitochondrial"/>
    <property type="match status" value="1"/>
</dbReference>
<dbReference type="FunFam" id="3.30.70.2570:FF:000001">
    <property type="entry name" value="Translation factor GUF1, mitochondrial"/>
    <property type="match status" value="1"/>
</dbReference>
<dbReference type="FunFam" id="3.30.70.870:FF:000004">
    <property type="entry name" value="Translation factor GUF1, mitochondrial"/>
    <property type="match status" value="1"/>
</dbReference>
<dbReference type="Gene3D" id="3.30.70.240">
    <property type="match status" value="1"/>
</dbReference>
<dbReference type="Gene3D" id="3.30.70.2570">
    <property type="entry name" value="Elongation factor 4, C-terminal domain"/>
    <property type="match status" value="1"/>
</dbReference>
<dbReference type="Gene3D" id="3.30.70.870">
    <property type="entry name" value="Elongation Factor G (Translational Gtpase), domain 3"/>
    <property type="match status" value="1"/>
</dbReference>
<dbReference type="Gene3D" id="3.40.50.300">
    <property type="entry name" value="P-loop containing nucleotide triphosphate hydrolases"/>
    <property type="match status" value="1"/>
</dbReference>
<dbReference type="Gene3D" id="2.40.30.10">
    <property type="entry name" value="Translation factors"/>
    <property type="match status" value="1"/>
</dbReference>
<dbReference type="HAMAP" id="MF_00071">
    <property type="entry name" value="LepA"/>
    <property type="match status" value="1"/>
</dbReference>
<dbReference type="InterPro" id="IPR006297">
    <property type="entry name" value="EF-4"/>
</dbReference>
<dbReference type="InterPro" id="IPR041095">
    <property type="entry name" value="EFG_II"/>
</dbReference>
<dbReference type="InterPro" id="IPR035647">
    <property type="entry name" value="EFG_III/V"/>
</dbReference>
<dbReference type="InterPro" id="IPR000640">
    <property type="entry name" value="EFG_V-like"/>
</dbReference>
<dbReference type="InterPro" id="IPR004161">
    <property type="entry name" value="EFTu-like_2"/>
</dbReference>
<dbReference type="InterPro" id="IPR031157">
    <property type="entry name" value="G_TR_CS"/>
</dbReference>
<dbReference type="InterPro" id="IPR038363">
    <property type="entry name" value="LepA_C_sf"/>
</dbReference>
<dbReference type="InterPro" id="IPR013842">
    <property type="entry name" value="LepA_CTD"/>
</dbReference>
<dbReference type="InterPro" id="IPR035654">
    <property type="entry name" value="LepA_IV"/>
</dbReference>
<dbReference type="InterPro" id="IPR027417">
    <property type="entry name" value="P-loop_NTPase"/>
</dbReference>
<dbReference type="InterPro" id="IPR005225">
    <property type="entry name" value="Small_GTP-bd"/>
</dbReference>
<dbReference type="InterPro" id="IPR000795">
    <property type="entry name" value="T_Tr_GTP-bd_dom"/>
</dbReference>
<dbReference type="InterPro" id="IPR009000">
    <property type="entry name" value="Transl_B-barrel_sf"/>
</dbReference>
<dbReference type="NCBIfam" id="TIGR01393">
    <property type="entry name" value="lepA"/>
    <property type="match status" value="1"/>
</dbReference>
<dbReference type="NCBIfam" id="TIGR00231">
    <property type="entry name" value="small_GTP"/>
    <property type="match status" value="1"/>
</dbReference>
<dbReference type="PANTHER" id="PTHR43512:SF4">
    <property type="entry name" value="TRANSLATION FACTOR GUF1 HOMOLOG, CHLOROPLASTIC"/>
    <property type="match status" value="1"/>
</dbReference>
<dbReference type="PANTHER" id="PTHR43512">
    <property type="entry name" value="TRANSLATION FACTOR GUF1-RELATED"/>
    <property type="match status" value="1"/>
</dbReference>
<dbReference type="Pfam" id="PF00679">
    <property type="entry name" value="EFG_C"/>
    <property type="match status" value="1"/>
</dbReference>
<dbReference type="Pfam" id="PF14492">
    <property type="entry name" value="EFG_III"/>
    <property type="match status" value="1"/>
</dbReference>
<dbReference type="Pfam" id="PF00009">
    <property type="entry name" value="GTP_EFTU"/>
    <property type="match status" value="1"/>
</dbReference>
<dbReference type="Pfam" id="PF03144">
    <property type="entry name" value="GTP_EFTU_D2"/>
    <property type="match status" value="1"/>
</dbReference>
<dbReference type="Pfam" id="PF06421">
    <property type="entry name" value="LepA_C"/>
    <property type="match status" value="1"/>
</dbReference>
<dbReference type="PRINTS" id="PR00315">
    <property type="entry name" value="ELONGATNFCT"/>
</dbReference>
<dbReference type="SMART" id="SM00838">
    <property type="entry name" value="EFG_C"/>
    <property type="match status" value="1"/>
</dbReference>
<dbReference type="SUPFAM" id="SSF54980">
    <property type="entry name" value="EF-G C-terminal domain-like"/>
    <property type="match status" value="2"/>
</dbReference>
<dbReference type="SUPFAM" id="SSF52540">
    <property type="entry name" value="P-loop containing nucleoside triphosphate hydrolases"/>
    <property type="match status" value="1"/>
</dbReference>
<dbReference type="SUPFAM" id="SSF50447">
    <property type="entry name" value="Translation proteins"/>
    <property type="match status" value="1"/>
</dbReference>
<dbReference type="PROSITE" id="PS00301">
    <property type="entry name" value="G_TR_1"/>
    <property type="match status" value="1"/>
</dbReference>
<dbReference type="PROSITE" id="PS51722">
    <property type="entry name" value="G_TR_2"/>
    <property type="match status" value="1"/>
</dbReference>
<protein>
    <recommendedName>
        <fullName evidence="1">Elongation factor 4</fullName>
        <shortName evidence="1">EF-4</shortName>
        <ecNumber evidence="1">3.6.5.n1</ecNumber>
    </recommendedName>
    <alternativeName>
        <fullName evidence="1">Ribosomal back-translocase LepA</fullName>
    </alternativeName>
</protein>